<reference key="1">
    <citation type="journal article" date="2008" name="Genome Res.">
        <title>Chlamydia trachomatis: genome sequence analysis of lymphogranuloma venereum isolates.</title>
        <authorList>
            <person name="Thomson N.R."/>
            <person name="Holden M.T.G."/>
            <person name="Carder C."/>
            <person name="Lennard N."/>
            <person name="Lockey S.J."/>
            <person name="Marsh P."/>
            <person name="Skipp P."/>
            <person name="O'Connor C.D."/>
            <person name="Goodhead I."/>
            <person name="Norbertzcak H."/>
            <person name="Harris B."/>
            <person name="Ormond D."/>
            <person name="Rance R."/>
            <person name="Quail M.A."/>
            <person name="Parkhill J."/>
            <person name="Stephens R.S."/>
            <person name="Clarke I.N."/>
        </authorList>
    </citation>
    <scope>NUCLEOTIDE SEQUENCE [LARGE SCALE GENOMIC DNA]</scope>
    <source>
        <strain>ATCC VR-902B / DSM 19102 / 434/Bu</strain>
    </source>
</reference>
<name>ACCA_CHLT2</name>
<sequence length="324" mass="36374">MELLPHEKQVVEYEKTIAEFKEKNKENSLLSSSEIQKLDKRLDRLKEKIYSDLTPWERVQICRHPSRPRTVNYIEGMCEEFVELCGDRTFRDDPAVVGGFAKIQGQRFMLIGQEKGCDTKSRMHRNFGMLCPEGFRKALRLAKMAEKFGLPIIFLVDTPGAFPGLTAEERGQGWAIATNLFELARLATPIIVIVIGEGCSGGALGMAIGDVVAMLEHSYYSVISPEGCASILWKDPKKNSDAAAMLKMHGEDLKGFAIVDAVIKEPIGGAHHNPAATYRSVQEYVLQEWVKLKDLPVEELLEKRYQKFRTIGLYETSSESDSEA</sequence>
<gene>
    <name evidence="1" type="primary">accA</name>
    <name type="ordered locus">CTL0517</name>
</gene>
<protein>
    <recommendedName>
        <fullName evidence="1">Acetyl-coenzyme A carboxylase carboxyl transferase subunit alpha</fullName>
        <shortName evidence="1">ACCase subunit alpha</shortName>
        <shortName evidence="1">Acetyl-CoA carboxylase carboxyltransferase subunit alpha</shortName>
        <ecNumber evidence="1">2.1.3.15</ecNumber>
    </recommendedName>
</protein>
<dbReference type="EC" id="2.1.3.15" evidence="1"/>
<dbReference type="EMBL" id="AM884176">
    <property type="protein sequence ID" value="CAP03957.1"/>
    <property type="molecule type" value="Genomic_DNA"/>
</dbReference>
<dbReference type="RefSeq" id="WP_009873685.1">
    <property type="nucleotide sequence ID" value="NC_010287.1"/>
</dbReference>
<dbReference type="RefSeq" id="YP_001654594.1">
    <property type="nucleotide sequence ID" value="NC_010287.1"/>
</dbReference>
<dbReference type="SMR" id="B0B7I1"/>
<dbReference type="KEGG" id="ctb:CTL0517"/>
<dbReference type="PATRIC" id="fig|471472.4.peg.556"/>
<dbReference type="HOGENOM" id="CLU_015486_0_2_0"/>
<dbReference type="UniPathway" id="UPA00655">
    <property type="reaction ID" value="UER00711"/>
</dbReference>
<dbReference type="Proteomes" id="UP001154402">
    <property type="component" value="Chromosome"/>
</dbReference>
<dbReference type="GO" id="GO:0009317">
    <property type="term" value="C:acetyl-CoA carboxylase complex"/>
    <property type="evidence" value="ECO:0007669"/>
    <property type="project" value="InterPro"/>
</dbReference>
<dbReference type="GO" id="GO:0003989">
    <property type="term" value="F:acetyl-CoA carboxylase activity"/>
    <property type="evidence" value="ECO:0007669"/>
    <property type="project" value="InterPro"/>
</dbReference>
<dbReference type="GO" id="GO:0005524">
    <property type="term" value="F:ATP binding"/>
    <property type="evidence" value="ECO:0007669"/>
    <property type="project" value="UniProtKB-KW"/>
</dbReference>
<dbReference type="GO" id="GO:0016743">
    <property type="term" value="F:carboxyl- or carbamoyltransferase activity"/>
    <property type="evidence" value="ECO:0007669"/>
    <property type="project" value="UniProtKB-UniRule"/>
</dbReference>
<dbReference type="GO" id="GO:0006633">
    <property type="term" value="P:fatty acid biosynthetic process"/>
    <property type="evidence" value="ECO:0007669"/>
    <property type="project" value="UniProtKB-KW"/>
</dbReference>
<dbReference type="GO" id="GO:2001295">
    <property type="term" value="P:malonyl-CoA biosynthetic process"/>
    <property type="evidence" value="ECO:0007669"/>
    <property type="project" value="UniProtKB-UniRule"/>
</dbReference>
<dbReference type="Gene3D" id="3.90.226.10">
    <property type="entry name" value="2-enoyl-CoA Hydratase, Chain A, domain 1"/>
    <property type="match status" value="1"/>
</dbReference>
<dbReference type="HAMAP" id="MF_00823">
    <property type="entry name" value="AcetylCoA_CT_alpha"/>
    <property type="match status" value="1"/>
</dbReference>
<dbReference type="InterPro" id="IPR001095">
    <property type="entry name" value="Acetyl_CoA_COase_a_su"/>
</dbReference>
<dbReference type="InterPro" id="IPR029045">
    <property type="entry name" value="ClpP/crotonase-like_dom_sf"/>
</dbReference>
<dbReference type="InterPro" id="IPR011763">
    <property type="entry name" value="COA_CT_C"/>
</dbReference>
<dbReference type="NCBIfam" id="TIGR00513">
    <property type="entry name" value="accA"/>
    <property type="match status" value="1"/>
</dbReference>
<dbReference type="NCBIfam" id="NF041504">
    <property type="entry name" value="AccA_sub"/>
    <property type="match status" value="1"/>
</dbReference>
<dbReference type="NCBIfam" id="NF004344">
    <property type="entry name" value="PRK05724.1"/>
    <property type="match status" value="1"/>
</dbReference>
<dbReference type="PANTHER" id="PTHR42853">
    <property type="entry name" value="ACETYL-COENZYME A CARBOXYLASE CARBOXYL TRANSFERASE SUBUNIT ALPHA"/>
    <property type="match status" value="1"/>
</dbReference>
<dbReference type="PANTHER" id="PTHR42853:SF3">
    <property type="entry name" value="ACETYL-COENZYME A CARBOXYLASE CARBOXYL TRANSFERASE SUBUNIT ALPHA, CHLOROPLASTIC"/>
    <property type="match status" value="1"/>
</dbReference>
<dbReference type="Pfam" id="PF03255">
    <property type="entry name" value="ACCA"/>
    <property type="match status" value="1"/>
</dbReference>
<dbReference type="PRINTS" id="PR01069">
    <property type="entry name" value="ACCCTRFRASEA"/>
</dbReference>
<dbReference type="SUPFAM" id="SSF52096">
    <property type="entry name" value="ClpP/crotonase"/>
    <property type="match status" value="1"/>
</dbReference>
<dbReference type="PROSITE" id="PS50989">
    <property type="entry name" value="COA_CT_CTER"/>
    <property type="match status" value="1"/>
</dbReference>
<keyword id="KW-0067">ATP-binding</keyword>
<keyword id="KW-0963">Cytoplasm</keyword>
<keyword id="KW-0275">Fatty acid biosynthesis</keyword>
<keyword id="KW-0276">Fatty acid metabolism</keyword>
<keyword id="KW-0444">Lipid biosynthesis</keyword>
<keyword id="KW-0443">Lipid metabolism</keyword>
<keyword id="KW-0547">Nucleotide-binding</keyword>
<keyword id="KW-0808">Transferase</keyword>
<accession>B0B7I1</accession>
<organism>
    <name type="scientific">Chlamydia trachomatis serovar L2 (strain ATCC VR-902B / DSM 19102 / 434/Bu)</name>
    <dbReference type="NCBI Taxonomy" id="471472"/>
    <lineage>
        <taxon>Bacteria</taxon>
        <taxon>Pseudomonadati</taxon>
        <taxon>Chlamydiota</taxon>
        <taxon>Chlamydiia</taxon>
        <taxon>Chlamydiales</taxon>
        <taxon>Chlamydiaceae</taxon>
        <taxon>Chlamydia/Chlamydophila group</taxon>
        <taxon>Chlamydia</taxon>
    </lineage>
</organism>
<comment type="function">
    <text evidence="1">Component of the acetyl coenzyme A carboxylase (ACC) complex. First, biotin carboxylase catalyzes the carboxylation of biotin on its carrier protein (BCCP) and then the CO(2) group is transferred by the carboxyltransferase to acetyl-CoA to form malonyl-CoA.</text>
</comment>
<comment type="catalytic activity">
    <reaction evidence="1">
        <text>N(6)-carboxybiotinyl-L-lysyl-[protein] + acetyl-CoA = N(6)-biotinyl-L-lysyl-[protein] + malonyl-CoA</text>
        <dbReference type="Rhea" id="RHEA:54728"/>
        <dbReference type="Rhea" id="RHEA-COMP:10505"/>
        <dbReference type="Rhea" id="RHEA-COMP:10506"/>
        <dbReference type="ChEBI" id="CHEBI:57288"/>
        <dbReference type="ChEBI" id="CHEBI:57384"/>
        <dbReference type="ChEBI" id="CHEBI:83144"/>
        <dbReference type="ChEBI" id="CHEBI:83145"/>
        <dbReference type="EC" id="2.1.3.15"/>
    </reaction>
</comment>
<comment type="pathway">
    <text evidence="1">Lipid metabolism; malonyl-CoA biosynthesis; malonyl-CoA from acetyl-CoA: step 1/1.</text>
</comment>
<comment type="subunit">
    <text evidence="1">Acetyl-CoA carboxylase is a heterohexamer composed of biotin carboxyl carrier protein (AccB), biotin carboxylase (AccC) and two subunits each of ACCase subunit alpha (AccA) and ACCase subunit beta (AccD).</text>
</comment>
<comment type="subcellular location">
    <subcellularLocation>
        <location evidence="1">Cytoplasm</location>
    </subcellularLocation>
</comment>
<comment type="similarity">
    <text evidence="1">Belongs to the AccA family.</text>
</comment>
<proteinExistence type="inferred from homology"/>
<feature type="chain" id="PRO_1000134472" description="Acetyl-coenzyme A carboxylase carboxyl transferase subunit alpha">
    <location>
        <begin position="1"/>
        <end position="324"/>
    </location>
</feature>
<feature type="domain" description="CoA carboxyltransferase C-terminal" evidence="2">
    <location>
        <begin position="37"/>
        <end position="291"/>
    </location>
</feature>
<evidence type="ECO:0000255" key="1">
    <source>
        <dbReference type="HAMAP-Rule" id="MF_00823"/>
    </source>
</evidence>
<evidence type="ECO:0000255" key="2">
    <source>
        <dbReference type="PROSITE-ProRule" id="PRU01137"/>
    </source>
</evidence>